<gene>
    <name evidence="1" type="primary">mutS2</name>
    <name evidence="1" type="synonym">rqcU</name>
    <name type="ordered locus">CLB_3152</name>
</gene>
<evidence type="ECO:0000255" key="1">
    <source>
        <dbReference type="HAMAP-Rule" id="MF_00092"/>
    </source>
</evidence>
<accession>A7FY72</accession>
<comment type="function">
    <text evidence="1">Endonuclease that is involved in the suppression of homologous recombination and thus may have a key role in the control of bacterial genetic diversity.</text>
</comment>
<comment type="function">
    <text evidence="1">Acts as a ribosome collision sensor, splitting the ribosome into its 2 subunits. Detects stalled/collided 70S ribosomes which it binds and splits by an ATP-hydrolysis driven conformational change. Acts upstream of the ribosome quality control system (RQC), a ribosome-associated complex that mediates the extraction of incompletely synthesized nascent chains from stalled ribosomes and their subsequent degradation. Probably generates substrates for RQC.</text>
</comment>
<comment type="subunit">
    <text evidence="1">Homodimer. Binds to stalled ribosomes, contacting rRNA.</text>
</comment>
<comment type="similarity">
    <text evidence="1">Belongs to the DNA mismatch repair MutS family. MutS2 subfamily.</text>
</comment>
<organism>
    <name type="scientific">Clostridium botulinum (strain ATCC 19397 / Type A)</name>
    <dbReference type="NCBI Taxonomy" id="441770"/>
    <lineage>
        <taxon>Bacteria</taxon>
        <taxon>Bacillati</taxon>
        <taxon>Bacillota</taxon>
        <taxon>Clostridia</taxon>
        <taxon>Eubacteriales</taxon>
        <taxon>Clostridiaceae</taxon>
        <taxon>Clostridium</taxon>
    </lineage>
</organism>
<sequence>MKDKSIKVLEFNKIQEILKNYTCTKAAKDIIEDLKPYDSMYEVREHLEETKEAFKLLITKGAPPFEGVYDIRSGISLAEKGSALLPGQLLKIAAVLRCARRFKEYINHKEEEESYRVLENICEGIFSLPKIEEEIFNAIEGEDEIADRASSTLYNIRRSLKEKNYSVRDKINSLVRSYSSYLQENIYTVRGDRYVLPVKAEHKGAVPGLVHDQSSTGATLFIEPMSLVNLNNEIKELMLKEKAEIERILTVLSAKINANITGVKTDANIVWELDFIFAKAKFASEYNCTCPTINDEGIVDIIEGRHPLIDRREVVPISVKLGEEFTSLMITGPNTGGKTVTLKTVGLIHLMAMSGLMIPARENSVISYFNNVFADIGDEQSIEQSLSTFSSHMKNIVEIMDKADENSLVLFDELGAGTDPTEGAALAISILENLRKRGTKIIATTHYSELKAYALRKEGVENASVEFDVETLRPTYRLLIGIPGKSNAFEISKRLGLPDYIIDFARENISNENIRFEELIQNLQEKSIKAQEDARLAENLKLERDKEKKKYEEKLEGLQKVRDNALIDARREAKNIIKEAKEEADKILKDIRQLERMGYSSDARRKLEEERKKLKDKLDSIEEKEIKTVHKGEALKNVKEGDEVLLASINQKVIVLSKPDNKGDVLVQAGIMKITANIKDLRAAKGSNSNNSSSKIKKSKKLNLNLRRVESSVDLRGMDAEEAIYTVDKYLDEAYLGGLGEVTIVHGKGTGVLRKTIMDMLKGHSHVKKYRLGEYGEGGTGVTVVELK</sequence>
<dbReference type="EC" id="3.1.-.-" evidence="1"/>
<dbReference type="EC" id="3.6.4.-" evidence="1"/>
<dbReference type="EMBL" id="CP000726">
    <property type="protein sequence ID" value="ABS33974.1"/>
    <property type="molecule type" value="Genomic_DNA"/>
</dbReference>
<dbReference type="RefSeq" id="WP_012099509.1">
    <property type="nucleotide sequence ID" value="NC_009697.1"/>
</dbReference>
<dbReference type="SMR" id="A7FY72"/>
<dbReference type="KEGG" id="cba:CLB_3152"/>
<dbReference type="HOGENOM" id="CLU_011252_2_1_9"/>
<dbReference type="GO" id="GO:0005524">
    <property type="term" value="F:ATP binding"/>
    <property type="evidence" value="ECO:0007669"/>
    <property type="project" value="UniProtKB-UniRule"/>
</dbReference>
<dbReference type="GO" id="GO:0016887">
    <property type="term" value="F:ATP hydrolysis activity"/>
    <property type="evidence" value="ECO:0007669"/>
    <property type="project" value="InterPro"/>
</dbReference>
<dbReference type="GO" id="GO:0140664">
    <property type="term" value="F:ATP-dependent DNA damage sensor activity"/>
    <property type="evidence" value="ECO:0007669"/>
    <property type="project" value="InterPro"/>
</dbReference>
<dbReference type="GO" id="GO:0004519">
    <property type="term" value="F:endonuclease activity"/>
    <property type="evidence" value="ECO:0007669"/>
    <property type="project" value="UniProtKB-UniRule"/>
</dbReference>
<dbReference type="GO" id="GO:0030983">
    <property type="term" value="F:mismatched DNA binding"/>
    <property type="evidence" value="ECO:0007669"/>
    <property type="project" value="InterPro"/>
</dbReference>
<dbReference type="GO" id="GO:0043023">
    <property type="term" value="F:ribosomal large subunit binding"/>
    <property type="evidence" value="ECO:0007669"/>
    <property type="project" value="UniProtKB-UniRule"/>
</dbReference>
<dbReference type="GO" id="GO:0019843">
    <property type="term" value="F:rRNA binding"/>
    <property type="evidence" value="ECO:0007669"/>
    <property type="project" value="UniProtKB-UniRule"/>
</dbReference>
<dbReference type="GO" id="GO:0006298">
    <property type="term" value="P:mismatch repair"/>
    <property type="evidence" value="ECO:0007669"/>
    <property type="project" value="InterPro"/>
</dbReference>
<dbReference type="GO" id="GO:0045910">
    <property type="term" value="P:negative regulation of DNA recombination"/>
    <property type="evidence" value="ECO:0007669"/>
    <property type="project" value="InterPro"/>
</dbReference>
<dbReference type="GO" id="GO:0072344">
    <property type="term" value="P:rescue of stalled ribosome"/>
    <property type="evidence" value="ECO:0007669"/>
    <property type="project" value="UniProtKB-UniRule"/>
</dbReference>
<dbReference type="CDD" id="cd03280">
    <property type="entry name" value="ABC_MutS2"/>
    <property type="match status" value="1"/>
</dbReference>
<dbReference type="FunFam" id="3.30.1370.110:FF:000007">
    <property type="entry name" value="Endonuclease MutS2"/>
    <property type="match status" value="1"/>
</dbReference>
<dbReference type="FunFam" id="3.40.50.300:FF:000830">
    <property type="entry name" value="Endonuclease MutS2"/>
    <property type="match status" value="1"/>
</dbReference>
<dbReference type="Gene3D" id="3.30.1370.110">
    <property type="match status" value="1"/>
</dbReference>
<dbReference type="Gene3D" id="3.40.50.300">
    <property type="entry name" value="P-loop containing nucleotide triphosphate hydrolases"/>
    <property type="match status" value="1"/>
</dbReference>
<dbReference type="HAMAP" id="MF_00092">
    <property type="entry name" value="MutS2"/>
    <property type="match status" value="1"/>
</dbReference>
<dbReference type="InterPro" id="IPR000432">
    <property type="entry name" value="DNA_mismatch_repair_MutS_C"/>
</dbReference>
<dbReference type="InterPro" id="IPR007696">
    <property type="entry name" value="DNA_mismatch_repair_MutS_core"/>
</dbReference>
<dbReference type="InterPro" id="IPR036187">
    <property type="entry name" value="DNA_mismatch_repair_MutS_sf"/>
</dbReference>
<dbReference type="InterPro" id="IPR046893">
    <property type="entry name" value="MSSS"/>
</dbReference>
<dbReference type="InterPro" id="IPR045076">
    <property type="entry name" value="MutS"/>
</dbReference>
<dbReference type="InterPro" id="IPR005747">
    <property type="entry name" value="MutS2"/>
</dbReference>
<dbReference type="InterPro" id="IPR027417">
    <property type="entry name" value="P-loop_NTPase"/>
</dbReference>
<dbReference type="InterPro" id="IPR002625">
    <property type="entry name" value="Smr_dom"/>
</dbReference>
<dbReference type="InterPro" id="IPR036063">
    <property type="entry name" value="Smr_dom_sf"/>
</dbReference>
<dbReference type="NCBIfam" id="TIGR01069">
    <property type="entry name" value="mutS2"/>
    <property type="match status" value="1"/>
</dbReference>
<dbReference type="PANTHER" id="PTHR48466:SF2">
    <property type="entry name" value="OS10G0509000 PROTEIN"/>
    <property type="match status" value="1"/>
</dbReference>
<dbReference type="PANTHER" id="PTHR48466">
    <property type="entry name" value="OS10G0509000 PROTEIN-RELATED"/>
    <property type="match status" value="1"/>
</dbReference>
<dbReference type="Pfam" id="PF20297">
    <property type="entry name" value="MSSS"/>
    <property type="match status" value="1"/>
</dbReference>
<dbReference type="Pfam" id="PF00488">
    <property type="entry name" value="MutS_V"/>
    <property type="match status" value="1"/>
</dbReference>
<dbReference type="Pfam" id="PF01713">
    <property type="entry name" value="Smr"/>
    <property type="match status" value="1"/>
</dbReference>
<dbReference type="PIRSF" id="PIRSF005814">
    <property type="entry name" value="MutS_YshD"/>
    <property type="match status" value="1"/>
</dbReference>
<dbReference type="SMART" id="SM00534">
    <property type="entry name" value="MUTSac"/>
    <property type="match status" value="1"/>
</dbReference>
<dbReference type="SMART" id="SM00533">
    <property type="entry name" value="MUTSd"/>
    <property type="match status" value="1"/>
</dbReference>
<dbReference type="SMART" id="SM00463">
    <property type="entry name" value="SMR"/>
    <property type="match status" value="1"/>
</dbReference>
<dbReference type="SUPFAM" id="SSF48334">
    <property type="entry name" value="DNA repair protein MutS, domain III"/>
    <property type="match status" value="1"/>
</dbReference>
<dbReference type="SUPFAM" id="SSF52540">
    <property type="entry name" value="P-loop containing nucleoside triphosphate hydrolases"/>
    <property type="match status" value="1"/>
</dbReference>
<dbReference type="SUPFAM" id="SSF160443">
    <property type="entry name" value="SMR domain-like"/>
    <property type="match status" value="1"/>
</dbReference>
<dbReference type="PROSITE" id="PS00486">
    <property type="entry name" value="DNA_MISMATCH_REPAIR_2"/>
    <property type="match status" value="1"/>
</dbReference>
<dbReference type="PROSITE" id="PS50828">
    <property type="entry name" value="SMR"/>
    <property type="match status" value="1"/>
</dbReference>
<keyword id="KW-0067">ATP-binding</keyword>
<keyword id="KW-0238">DNA-binding</keyword>
<keyword id="KW-0255">Endonuclease</keyword>
<keyword id="KW-0378">Hydrolase</keyword>
<keyword id="KW-0540">Nuclease</keyword>
<keyword id="KW-0547">Nucleotide-binding</keyword>
<keyword id="KW-0694">RNA-binding</keyword>
<keyword id="KW-0699">rRNA-binding</keyword>
<proteinExistence type="inferred from homology"/>
<reference key="1">
    <citation type="journal article" date="2007" name="PLoS ONE">
        <title>Analysis of the neurotoxin complex genes in Clostridium botulinum A1-A4 and B1 strains: BoNT/A3, /Ba4 and /B1 clusters are located within plasmids.</title>
        <authorList>
            <person name="Smith T.J."/>
            <person name="Hill K.K."/>
            <person name="Foley B.T."/>
            <person name="Detter J.C."/>
            <person name="Munk A.C."/>
            <person name="Bruce D.C."/>
            <person name="Doggett N.A."/>
            <person name="Smith L.A."/>
            <person name="Marks J.D."/>
            <person name="Xie G."/>
            <person name="Brettin T.S."/>
        </authorList>
    </citation>
    <scope>NUCLEOTIDE SEQUENCE [LARGE SCALE GENOMIC DNA]</scope>
    <source>
        <strain>ATCC 19397 / Type A</strain>
    </source>
</reference>
<protein>
    <recommendedName>
        <fullName evidence="1">Endonuclease MutS2</fullName>
        <ecNumber evidence="1">3.1.-.-</ecNumber>
    </recommendedName>
    <alternativeName>
        <fullName evidence="1">Ribosome-associated protein quality control-upstream factor</fullName>
        <shortName evidence="1">RQC-upstream factor</shortName>
        <shortName evidence="1">RqcU</shortName>
        <ecNumber evidence="1">3.6.4.-</ecNumber>
    </alternativeName>
</protein>
<name>MUTS2_CLOB1</name>
<feature type="chain" id="PRO_1000093344" description="Endonuclease MutS2">
    <location>
        <begin position="1"/>
        <end position="788"/>
    </location>
</feature>
<feature type="domain" description="Smr" evidence="1">
    <location>
        <begin position="713"/>
        <end position="788"/>
    </location>
</feature>
<feature type="binding site" evidence="1">
    <location>
        <begin position="332"/>
        <end position="339"/>
    </location>
    <ligand>
        <name>ATP</name>
        <dbReference type="ChEBI" id="CHEBI:30616"/>
    </ligand>
</feature>